<comment type="function">
    <text evidence="1">Catalyzes the formation of 6,7-dimethyl-8-ribityllumazine by condensation of 5-amino-6-(D-ribitylamino)uracil with 3,4-dihydroxy-2-butanone 4-phosphate. This is the penultimate step in the biosynthesis of riboflavin.</text>
</comment>
<comment type="catalytic activity">
    <reaction evidence="1">
        <text>(2S)-2-hydroxy-3-oxobutyl phosphate + 5-amino-6-(D-ribitylamino)uracil = 6,7-dimethyl-8-(1-D-ribityl)lumazine + phosphate + 2 H2O + H(+)</text>
        <dbReference type="Rhea" id="RHEA:26152"/>
        <dbReference type="ChEBI" id="CHEBI:15377"/>
        <dbReference type="ChEBI" id="CHEBI:15378"/>
        <dbReference type="ChEBI" id="CHEBI:15934"/>
        <dbReference type="ChEBI" id="CHEBI:43474"/>
        <dbReference type="ChEBI" id="CHEBI:58201"/>
        <dbReference type="ChEBI" id="CHEBI:58830"/>
        <dbReference type="EC" id="2.5.1.78"/>
    </reaction>
</comment>
<comment type="pathway">
    <text evidence="1">Cofactor biosynthesis; riboflavin biosynthesis; riboflavin from 2-hydroxy-3-oxobutyl phosphate and 5-amino-6-(D-ribitylamino)uracil: step 1/2.</text>
</comment>
<comment type="subunit">
    <text evidence="1">Forms an icosahedral capsid composed of 60 subunits, arranged as a dodecamer of pentamers.</text>
</comment>
<comment type="similarity">
    <text evidence="1">Belongs to the DMRL synthase family.</text>
</comment>
<proteinExistence type="inferred from homology"/>
<reference key="1">
    <citation type="journal article" date="2006" name="J. Bacteriol.">
        <title>Complete genome sequence of Yersinia pestis strains Antiqua and Nepal516: evidence of gene reduction in an emerging pathogen.</title>
        <authorList>
            <person name="Chain P.S.G."/>
            <person name="Hu P."/>
            <person name="Malfatti S.A."/>
            <person name="Radnedge L."/>
            <person name="Larimer F."/>
            <person name="Vergez L.M."/>
            <person name="Worsham P."/>
            <person name="Chu M.C."/>
            <person name="Andersen G.L."/>
        </authorList>
    </citation>
    <scope>NUCLEOTIDE SEQUENCE [LARGE SCALE GENOMIC DNA]</scope>
    <source>
        <strain>Antiqua</strain>
    </source>
</reference>
<gene>
    <name evidence="1" type="primary">ribH</name>
    <name type="ordered locus">YPA_2676</name>
</gene>
<feature type="chain" id="PRO_1000040552" description="6,7-dimethyl-8-ribityllumazine synthase">
    <location>
        <begin position="1"/>
        <end position="156"/>
    </location>
</feature>
<feature type="active site" description="Proton donor" evidence="1">
    <location>
        <position position="89"/>
    </location>
</feature>
<feature type="binding site" evidence="1">
    <location>
        <position position="22"/>
    </location>
    <ligand>
        <name>5-amino-6-(D-ribitylamino)uracil</name>
        <dbReference type="ChEBI" id="CHEBI:15934"/>
    </ligand>
</feature>
<feature type="binding site" evidence="1">
    <location>
        <begin position="57"/>
        <end position="59"/>
    </location>
    <ligand>
        <name>5-amino-6-(D-ribitylamino)uracil</name>
        <dbReference type="ChEBI" id="CHEBI:15934"/>
    </ligand>
</feature>
<feature type="binding site" evidence="1">
    <location>
        <begin position="81"/>
        <end position="83"/>
    </location>
    <ligand>
        <name>5-amino-6-(D-ribitylamino)uracil</name>
        <dbReference type="ChEBI" id="CHEBI:15934"/>
    </ligand>
</feature>
<feature type="binding site" evidence="1">
    <location>
        <begin position="86"/>
        <end position="87"/>
    </location>
    <ligand>
        <name>(2S)-2-hydroxy-3-oxobutyl phosphate</name>
        <dbReference type="ChEBI" id="CHEBI:58830"/>
    </ligand>
</feature>
<feature type="binding site" evidence="1">
    <location>
        <position position="114"/>
    </location>
    <ligand>
        <name>5-amino-6-(D-ribitylamino)uracil</name>
        <dbReference type="ChEBI" id="CHEBI:15934"/>
    </ligand>
</feature>
<feature type="binding site" evidence="1">
    <location>
        <position position="128"/>
    </location>
    <ligand>
        <name>(2S)-2-hydroxy-3-oxobutyl phosphate</name>
        <dbReference type="ChEBI" id="CHEBI:58830"/>
    </ligand>
</feature>
<organism>
    <name type="scientific">Yersinia pestis bv. Antiqua (strain Antiqua)</name>
    <dbReference type="NCBI Taxonomy" id="360102"/>
    <lineage>
        <taxon>Bacteria</taxon>
        <taxon>Pseudomonadati</taxon>
        <taxon>Pseudomonadota</taxon>
        <taxon>Gammaproteobacteria</taxon>
        <taxon>Enterobacterales</taxon>
        <taxon>Yersiniaceae</taxon>
        <taxon>Yersinia</taxon>
    </lineage>
</organism>
<accession>Q1C4I4</accession>
<keyword id="KW-0686">Riboflavin biosynthesis</keyword>
<keyword id="KW-0808">Transferase</keyword>
<evidence type="ECO:0000255" key="1">
    <source>
        <dbReference type="HAMAP-Rule" id="MF_00178"/>
    </source>
</evidence>
<dbReference type="EC" id="2.5.1.78" evidence="1"/>
<dbReference type="EMBL" id="CP000308">
    <property type="protein sequence ID" value="ABG14638.1"/>
    <property type="molecule type" value="Genomic_DNA"/>
</dbReference>
<dbReference type="SMR" id="Q1C4I4"/>
<dbReference type="KEGG" id="ypa:YPA_2676"/>
<dbReference type="UniPathway" id="UPA00275">
    <property type="reaction ID" value="UER00404"/>
</dbReference>
<dbReference type="Proteomes" id="UP000001971">
    <property type="component" value="Chromosome"/>
</dbReference>
<dbReference type="GO" id="GO:0005829">
    <property type="term" value="C:cytosol"/>
    <property type="evidence" value="ECO:0007669"/>
    <property type="project" value="TreeGrafter"/>
</dbReference>
<dbReference type="GO" id="GO:0009349">
    <property type="term" value="C:riboflavin synthase complex"/>
    <property type="evidence" value="ECO:0007669"/>
    <property type="project" value="InterPro"/>
</dbReference>
<dbReference type="GO" id="GO:0000906">
    <property type="term" value="F:6,7-dimethyl-8-ribityllumazine synthase activity"/>
    <property type="evidence" value="ECO:0007669"/>
    <property type="project" value="UniProtKB-UniRule"/>
</dbReference>
<dbReference type="GO" id="GO:0009231">
    <property type="term" value="P:riboflavin biosynthetic process"/>
    <property type="evidence" value="ECO:0007669"/>
    <property type="project" value="UniProtKB-UniRule"/>
</dbReference>
<dbReference type="CDD" id="cd09209">
    <property type="entry name" value="Lumazine_synthase-I"/>
    <property type="match status" value="1"/>
</dbReference>
<dbReference type="FunFam" id="3.40.50.960:FF:000001">
    <property type="entry name" value="6,7-dimethyl-8-ribityllumazine synthase"/>
    <property type="match status" value="1"/>
</dbReference>
<dbReference type="Gene3D" id="3.40.50.960">
    <property type="entry name" value="Lumazine/riboflavin synthase"/>
    <property type="match status" value="1"/>
</dbReference>
<dbReference type="HAMAP" id="MF_00178">
    <property type="entry name" value="Lumazine_synth"/>
    <property type="match status" value="1"/>
</dbReference>
<dbReference type="InterPro" id="IPR034964">
    <property type="entry name" value="LS"/>
</dbReference>
<dbReference type="InterPro" id="IPR002180">
    <property type="entry name" value="LS/RS"/>
</dbReference>
<dbReference type="InterPro" id="IPR036467">
    <property type="entry name" value="LS/RS_sf"/>
</dbReference>
<dbReference type="NCBIfam" id="TIGR00114">
    <property type="entry name" value="lumazine-synth"/>
    <property type="match status" value="1"/>
</dbReference>
<dbReference type="NCBIfam" id="NF000812">
    <property type="entry name" value="PRK00061.1-4"/>
    <property type="match status" value="1"/>
</dbReference>
<dbReference type="PANTHER" id="PTHR21058:SF0">
    <property type="entry name" value="6,7-DIMETHYL-8-RIBITYLLUMAZINE SYNTHASE"/>
    <property type="match status" value="1"/>
</dbReference>
<dbReference type="PANTHER" id="PTHR21058">
    <property type="entry name" value="6,7-DIMETHYL-8-RIBITYLLUMAZINE SYNTHASE DMRL SYNTHASE LUMAZINE SYNTHASE"/>
    <property type="match status" value="1"/>
</dbReference>
<dbReference type="Pfam" id="PF00885">
    <property type="entry name" value="DMRL_synthase"/>
    <property type="match status" value="1"/>
</dbReference>
<dbReference type="SUPFAM" id="SSF52121">
    <property type="entry name" value="Lumazine synthase"/>
    <property type="match status" value="1"/>
</dbReference>
<sequence length="156" mass="16197">MNVIEGVVATPNARVAIAIARFNNFINDSLLDGAIDALKRIGQVSDDNITVVWVPGAYELPLVANVLAKTNRYDAVIALGTVIRGGTAHFEYVAGEASSGLSSVAMNSDIPVAFGVLTTESIEQAIERAGTKAGNKGAEAALTALEMINVIKAIKG</sequence>
<protein>
    <recommendedName>
        <fullName evidence="1">6,7-dimethyl-8-ribityllumazine synthase</fullName>
        <shortName evidence="1">DMRL synthase</shortName>
        <shortName evidence="1">LS</shortName>
        <shortName evidence="1">Lumazine synthase</shortName>
        <ecNumber evidence="1">2.5.1.78</ecNumber>
    </recommendedName>
</protein>
<name>RISB_YERPA</name>